<proteinExistence type="evidence at transcript level"/>
<name>CR14_HORVU</name>
<accession>P26154</accession>
<reference key="1">
    <citation type="journal article" date="1990" name="J. Exp. Bot.">
        <title>Molecular characterization of a barley gene induced by cold treatment.</title>
        <authorList>
            <person name="Dunn M.A."/>
            <person name="Hughes M.A."/>
            <person name="Pearce R.S."/>
            <person name="Jack P.L."/>
        </authorList>
    </citation>
    <scope>NUCLEOTIDE SEQUENCE [MRNA]</scope>
    <source>
        <strain>cv. Igri</strain>
        <tissue>Shoot meristem</tissue>
    </source>
</reference>
<sequence>MAKSLAVALRATGGARVMRRAGREREGCSDTRCRCQRWRRRLQGFGLAAAGGNRYRNKHHYRPAGGDPWDPCYRPMIISTSCAGATRS</sequence>
<comment type="induction">
    <text>By cold stress.</text>
</comment>
<comment type="miscellaneous">
    <text>Contains several arginine residues in close proximity which may be involved in protein RNA interactions.</text>
</comment>
<keyword id="KW-0694">RNA-binding</keyword>
<keyword id="KW-0346">Stress response</keyword>
<protein>
    <recommendedName>
        <fullName>Cold-regulated protein BLT14</fullName>
    </recommendedName>
</protein>
<dbReference type="EMBL" id="X57554">
    <property type="protein sequence ID" value="CAA40779.1"/>
    <property type="molecule type" value="mRNA"/>
</dbReference>
<dbReference type="PIR" id="S16161">
    <property type="entry name" value="S16161"/>
</dbReference>
<dbReference type="GO" id="GO:0003723">
    <property type="term" value="F:RNA binding"/>
    <property type="evidence" value="ECO:0007669"/>
    <property type="project" value="UniProtKB-KW"/>
</dbReference>
<gene>
    <name type="primary">BLT14</name>
</gene>
<feature type="chain" id="PRO_0000079321" description="Cold-regulated protein BLT14">
    <location>
        <begin position="1"/>
        <end position="88"/>
    </location>
</feature>
<organism>
    <name type="scientific">Hordeum vulgare</name>
    <name type="common">Barley</name>
    <dbReference type="NCBI Taxonomy" id="4513"/>
    <lineage>
        <taxon>Eukaryota</taxon>
        <taxon>Viridiplantae</taxon>
        <taxon>Streptophyta</taxon>
        <taxon>Embryophyta</taxon>
        <taxon>Tracheophyta</taxon>
        <taxon>Spermatophyta</taxon>
        <taxon>Magnoliopsida</taxon>
        <taxon>Liliopsida</taxon>
        <taxon>Poales</taxon>
        <taxon>Poaceae</taxon>
        <taxon>BOP clade</taxon>
        <taxon>Pooideae</taxon>
        <taxon>Triticodae</taxon>
        <taxon>Triticeae</taxon>
        <taxon>Hordeinae</taxon>
        <taxon>Hordeum</taxon>
    </lineage>
</organism>